<accession>Q8K1T4</accession>
<accession>Q3U982</accession>
<gene>
    <name type="primary">Ly6g5b</name>
</gene>
<organism>
    <name type="scientific">Mus musculus</name>
    <name type="common">Mouse</name>
    <dbReference type="NCBI Taxonomy" id="10090"/>
    <lineage>
        <taxon>Eukaryota</taxon>
        <taxon>Metazoa</taxon>
        <taxon>Chordata</taxon>
        <taxon>Craniata</taxon>
        <taxon>Vertebrata</taxon>
        <taxon>Euteleostomi</taxon>
        <taxon>Mammalia</taxon>
        <taxon>Eutheria</taxon>
        <taxon>Euarchontoglires</taxon>
        <taxon>Glires</taxon>
        <taxon>Rodentia</taxon>
        <taxon>Myomorpha</taxon>
        <taxon>Muroidea</taxon>
        <taxon>Muridae</taxon>
        <taxon>Murinae</taxon>
        <taxon>Mus</taxon>
        <taxon>Mus</taxon>
    </lineage>
</organism>
<proteinExistence type="evidence at protein level"/>
<sequence length="194" mass="21615">MRARVLVGMLTMVGFAMGKAPVARVRTCHLCLLEDPSLGCISGSEKCTISLPSPCMVITIYKNTTVRFHVRGCGQHHSYRCQERHVIYQSDYLYKADCCQYDYCNSWSSAQHQSTLRGSPGSHLGMPLSASQIKQFYQALNLSLPQPGFHAHKVSEGLESLILPPELGLSIADLRQIYLFLNSSGLLVLPWDRP</sequence>
<evidence type="ECO:0000250" key="1"/>
<evidence type="ECO:0000255" key="2"/>
<evidence type="ECO:0000269" key="3">
    <source>
    </source>
</evidence>
<evidence type="ECO:0000303" key="4">
    <source>
    </source>
</evidence>
<evidence type="ECO:0000305" key="5"/>
<keyword id="KW-0025">Alternative splicing</keyword>
<keyword id="KW-1015">Disulfide bond</keyword>
<keyword id="KW-0325">Glycoprotein</keyword>
<keyword id="KW-1185">Reference proteome</keyword>
<keyword id="KW-0964">Secreted</keyword>
<keyword id="KW-0732">Signal</keyword>
<protein>
    <recommendedName>
        <fullName>Lymphocyte antigen 6 complex locus protein G5b</fullName>
    </recommendedName>
</protein>
<dbReference type="EMBL" id="AJ315553">
    <property type="protein sequence ID" value="CAC85549.1"/>
    <property type="molecule type" value="mRNA"/>
</dbReference>
<dbReference type="EMBL" id="AK151902">
    <property type="protein sequence ID" value="BAE30785.1"/>
    <property type="molecule type" value="mRNA"/>
</dbReference>
<dbReference type="EMBL" id="BC131964">
    <property type="protein sequence ID" value="AAI31965.1"/>
    <property type="molecule type" value="mRNA"/>
</dbReference>
<dbReference type="EMBL" id="BC131966">
    <property type="protein sequence ID" value="AAI31967.1"/>
    <property type="molecule type" value="mRNA"/>
</dbReference>
<dbReference type="CCDS" id="CCDS28683.1">
    <molecule id="Q8K1T4-1"/>
</dbReference>
<dbReference type="CCDS" id="CCDS89083.1">
    <molecule id="Q8K1T4-2"/>
</dbReference>
<dbReference type="RefSeq" id="NP_001357964.1">
    <molecule id="Q8K1T4-2"/>
    <property type="nucleotide sequence ID" value="NM_001371035.1"/>
</dbReference>
<dbReference type="RefSeq" id="NP_683741.1">
    <molecule id="Q8K1T4-1"/>
    <property type="nucleotide sequence ID" value="NM_148939.3"/>
</dbReference>
<dbReference type="BioGRID" id="234462">
    <property type="interactions" value="3"/>
</dbReference>
<dbReference type="FunCoup" id="Q8K1T4">
    <property type="interactions" value="13"/>
</dbReference>
<dbReference type="STRING" id="10090.ENSMUSP00000052133"/>
<dbReference type="GlyCosmos" id="Q8K1T4">
    <property type="glycosylation" value="2 sites, No reported glycans"/>
</dbReference>
<dbReference type="GlyGen" id="Q8K1T4">
    <property type="glycosylation" value="2 sites"/>
</dbReference>
<dbReference type="PhosphoSitePlus" id="Q8K1T4"/>
<dbReference type="PaxDb" id="10090-ENSMUSP00000052133"/>
<dbReference type="ProteomicsDB" id="290193">
    <molecule id="Q8K1T4-1"/>
</dbReference>
<dbReference type="ProteomicsDB" id="290194">
    <molecule id="Q8K1T4-2"/>
</dbReference>
<dbReference type="DNASU" id="266614"/>
<dbReference type="Ensembl" id="ENSMUST00000062657.5">
    <molecule id="Q8K1T4-1"/>
    <property type="protein sequence ID" value="ENSMUSP00000052133.5"/>
    <property type="gene ID" value="ENSMUSG00000043807.7"/>
</dbReference>
<dbReference type="Ensembl" id="ENSMUST00000172854.2">
    <molecule id="Q8K1T4-2"/>
    <property type="protein sequence ID" value="ENSMUSP00000138033.2"/>
    <property type="gene ID" value="ENSMUSG00000043807.7"/>
</dbReference>
<dbReference type="GeneID" id="266614"/>
<dbReference type="KEGG" id="mmu:266614"/>
<dbReference type="UCSC" id="uc008cfs.2">
    <molecule id="Q8K1T4-1"/>
    <property type="organism name" value="mouse"/>
</dbReference>
<dbReference type="AGR" id="MGI:2385809"/>
<dbReference type="CTD" id="58496"/>
<dbReference type="MGI" id="MGI:2385809">
    <property type="gene designation" value="Ly6g5b"/>
</dbReference>
<dbReference type="VEuPathDB" id="HostDB:ENSMUSG00000043807"/>
<dbReference type="eggNOG" id="ENOG502SXN1">
    <property type="taxonomic scope" value="Eukaryota"/>
</dbReference>
<dbReference type="GeneTree" id="ENSGT00520000060793"/>
<dbReference type="HOGENOM" id="CLU_120540_0_0_1"/>
<dbReference type="InParanoid" id="Q8K1T4"/>
<dbReference type="OMA" id="CMVISIY"/>
<dbReference type="OrthoDB" id="9834531at2759"/>
<dbReference type="PhylomeDB" id="Q8K1T4"/>
<dbReference type="TreeFam" id="TF338717"/>
<dbReference type="BioGRID-ORCS" id="266614">
    <property type="hits" value="1 hit in 77 CRISPR screens"/>
</dbReference>
<dbReference type="PRO" id="PR:Q8K1T4"/>
<dbReference type="Proteomes" id="UP000000589">
    <property type="component" value="Chromosome 17"/>
</dbReference>
<dbReference type="RNAct" id="Q8K1T4">
    <property type="molecule type" value="protein"/>
</dbReference>
<dbReference type="Bgee" id="ENSMUSG00000043807">
    <property type="expression patterns" value="Expressed in granulocyte and 57 other cell types or tissues"/>
</dbReference>
<dbReference type="ExpressionAtlas" id="Q8K1T4">
    <property type="expression patterns" value="baseline and differential"/>
</dbReference>
<dbReference type="GO" id="GO:0009897">
    <property type="term" value="C:external side of plasma membrane"/>
    <property type="evidence" value="ECO:0007669"/>
    <property type="project" value="Ensembl"/>
</dbReference>
<dbReference type="GO" id="GO:0005576">
    <property type="term" value="C:extracellular region"/>
    <property type="evidence" value="ECO:0007669"/>
    <property type="project" value="UniProtKB-SubCell"/>
</dbReference>
<dbReference type="GO" id="GO:0032991">
    <property type="term" value="C:protein-containing complex"/>
    <property type="evidence" value="ECO:0007669"/>
    <property type="project" value="Ensembl"/>
</dbReference>
<dbReference type="CDD" id="cd23544">
    <property type="entry name" value="TFP_LU_ECD_Ly6G5b"/>
    <property type="match status" value="1"/>
</dbReference>
<dbReference type="InterPro" id="IPR016054">
    <property type="entry name" value="LY6_UPA_recep-like"/>
</dbReference>
<dbReference type="InterPro" id="IPR038773">
    <property type="entry name" value="LY6G5B"/>
</dbReference>
<dbReference type="PANTHER" id="PTHR14313">
    <property type="entry name" value="LYMPHOCYTE ANTIGEN 6 COMPLEX LOCUS PROTEIN G5B"/>
    <property type="match status" value="1"/>
</dbReference>
<dbReference type="PANTHER" id="PTHR14313:SF2">
    <property type="entry name" value="LYMPHOCYTE ANTIGEN 6 COMPLEX LOCUS PROTEIN G5B"/>
    <property type="match status" value="1"/>
</dbReference>
<dbReference type="Pfam" id="PF00021">
    <property type="entry name" value="UPAR_LY6"/>
    <property type="match status" value="1"/>
</dbReference>
<reference key="1">
    <citation type="journal article" date="2002" name="Genomics">
        <title>Transcriptional analysis of a novel cluster of LY-6 family members in the human and mouse major histocompatibility complex: five genes with many splice forms.</title>
        <authorList>
            <person name="Mallya M."/>
            <person name="Campbell R.D."/>
            <person name="Aguado B."/>
        </authorList>
    </citation>
    <scope>NUCLEOTIDE SEQUENCE [MRNA] (ISOFORM 1)</scope>
    <source>
        <strain>129</strain>
    </source>
</reference>
<reference key="2">
    <citation type="journal article" date="2005" name="Science">
        <title>The transcriptional landscape of the mammalian genome.</title>
        <authorList>
            <person name="Carninci P."/>
            <person name="Kasukawa T."/>
            <person name="Katayama S."/>
            <person name="Gough J."/>
            <person name="Frith M.C."/>
            <person name="Maeda N."/>
            <person name="Oyama R."/>
            <person name="Ravasi T."/>
            <person name="Lenhard B."/>
            <person name="Wells C."/>
            <person name="Kodzius R."/>
            <person name="Shimokawa K."/>
            <person name="Bajic V.B."/>
            <person name="Brenner S.E."/>
            <person name="Batalov S."/>
            <person name="Forrest A.R."/>
            <person name="Zavolan M."/>
            <person name="Davis M.J."/>
            <person name="Wilming L.G."/>
            <person name="Aidinis V."/>
            <person name="Allen J.E."/>
            <person name="Ambesi-Impiombato A."/>
            <person name="Apweiler R."/>
            <person name="Aturaliya R.N."/>
            <person name="Bailey T.L."/>
            <person name="Bansal M."/>
            <person name="Baxter L."/>
            <person name="Beisel K.W."/>
            <person name="Bersano T."/>
            <person name="Bono H."/>
            <person name="Chalk A.M."/>
            <person name="Chiu K.P."/>
            <person name="Choudhary V."/>
            <person name="Christoffels A."/>
            <person name="Clutterbuck D.R."/>
            <person name="Crowe M.L."/>
            <person name="Dalla E."/>
            <person name="Dalrymple B.P."/>
            <person name="de Bono B."/>
            <person name="Della Gatta G."/>
            <person name="di Bernardo D."/>
            <person name="Down T."/>
            <person name="Engstrom P."/>
            <person name="Fagiolini M."/>
            <person name="Faulkner G."/>
            <person name="Fletcher C.F."/>
            <person name="Fukushima T."/>
            <person name="Furuno M."/>
            <person name="Futaki S."/>
            <person name="Gariboldi M."/>
            <person name="Georgii-Hemming P."/>
            <person name="Gingeras T.R."/>
            <person name="Gojobori T."/>
            <person name="Green R.E."/>
            <person name="Gustincich S."/>
            <person name="Harbers M."/>
            <person name="Hayashi Y."/>
            <person name="Hensch T.K."/>
            <person name="Hirokawa N."/>
            <person name="Hill D."/>
            <person name="Huminiecki L."/>
            <person name="Iacono M."/>
            <person name="Ikeo K."/>
            <person name="Iwama A."/>
            <person name="Ishikawa T."/>
            <person name="Jakt M."/>
            <person name="Kanapin A."/>
            <person name="Katoh M."/>
            <person name="Kawasawa Y."/>
            <person name="Kelso J."/>
            <person name="Kitamura H."/>
            <person name="Kitano H."/>
            <person name="Kollias G."/>
            <person name="Krishnan S.P."/>
            <person name="Kruger A."/>
            <person name="Kummerfeld S.K."/>
            <person name="Kurochkin I.V."/>
            <person name="Lareau L.F."/>
            <person name="Lazarevic D."/>
            <person name="Lipovich L."/>
            <person name="Liu J."/>
            <person name="Liuni S."/>
            <person name="McWilliam S."/>
            <person name="Madan Babu M."/>
            <person name="Madera M."/>
            <person name="Marchionni L."/>
            <person name="Matsuda H."/>
            <person name="Matsuzawa S."/>
            <person name="Miki H."/>
            <person name="Mignone F."/>
            <person name="Miyake S."/>
            <person name="Morris K."/>
            <person name="Mottagui-Tabar S."/>
            <person name="Mulder N."/>
            <person name="Nakano N."/>
            <person name="Nakauchi H."/>
            <person name="Ng P."/>
            <person name="Nilsson R."/>
            <person name="Nishiguchi S."/>
            <person name="Nishikawa S."/>
            <person name="Nori F."/>
            <person name="Ohara O."/>
            <person name="Okazaki Y."/>
            <person name="Orlando V."/>
            <person name="Pang K.C."/>
            <person name="Pavan W.J."/>
            <person name="Pavesi G."/>
            <person name="Pesole G."/>
            <person name="Petrovsky N."/>
            <person name="Piazza S."/>
            <person name="Reed J."/>
            <person name="Reid J.F."/>
            <person name="Ring B.Z."/>
            <person name="Ringwald M."/>
            <person name="Rost B."/>
            <person name="Ruan Y."/>
            <person name="Salzberg S.L."/>
            <person name="Sandelin A."/>
            <person name="Schneider C."/>
            <person name="Schoenbach C."/>
            <person name="Sekiguchi K."/>
            <person name="Semple C.A."/>
            <person name="Seno S."/>
            <person name="Sessa L."/>
            <person name="Sheng Y."/>
            <person name="Shibata Y."/>
            <person name="Shimada H."/>
            <person name="Shimada K."/>
            <person name="Silva D."/>
            <person name="Sinclair B."/>
            <person name="Sperling S."/>
            <person name="Stupka E."/>
            <person name="Sugiura K."/>
            <person name="Sultana R."/>
            <person name="Takenaka Y."/>
            <person name="Taki K."/>
            <person name="Tammoja K."/>
            <person name="Tan S.L."/>
            <person name="Tang S."/>
            <person name="Taylor M.S."/>
            <person name="Tegner J."/>
            <person name="Teichmann S.A."/>
            <person name="Ueda H.R."/>
            <person name="van Nimwegen E."/>
            <person name="Verardo R."/>
            <person name="Wei C.L."/>
            <person name="Yagi K."/>
            <person name="Yamanishi H."/>
            <person name="Zabarovsky E."/>
            <person name="Zhu S."/>
            <person name="Zimmer A."/>
            <person name="Hide W."/>
            <person name="Bult C."/>
            <person name="Grimmond S.M."/>
            <person name="Teasdale R.D."/>
            <person name="Liu E.T."/>
            <person name="Brusic V."/>
            <person name="Quackenbush J."/>
            <person name="Wahlestedt C."/>
            <person name="Mattick J.S."/>
            <person name="Hume D.A."/>
            <person name="Kai C."/>
            <person name="Sasaki D."/>
            <person name="Tomaru Y."/>
            <person name="Fukuda S."/>
            <person name="Kanamori-Katayama M."/>
            <person name="Suzuki M."/>
            <person name="Aoki J."/>
            <person name="Arakawa T."/>
            <person name="Iida J."/>
            <person name="Imamura K."/>
            <person name="Itoh M."/>
            <person name="Kato T."/>
            <person name="Kawaji H."/>
            <person name="Kawagashira N."/>
            <person name="Kawashima T."/>
            <person name="Kojima M."/>
            <person name="Kondo S."/>
            <person name="Konno H."/>
            <person name="Nakano K."/>
            <person name="Ninomiya N."/>
            <person name="Nishio T."/>
            <person name="Okada M."/>
            <person name="Plessy C."/>
            <person name="Shibata K."/>
            <person name="Shiraki T."/>
            <person name="Suzuki S."/>
            <person name="Tagami M."/>
            <person name="Waki K."/>
            <person name="Watahiki A."/>
            <person name="Okamura-Oho Y."/>
            <person name="Suzuki H."/>
            <person name="Kawai J."/>
            <person name="Hayashizaki Y."/>
        </authorList>
    </citation>
    <scope>NUCLEOTIDE SEQUENCE [LARGE SCALE MRNA] (ISOFORM 2)</scope>
    <source>
        <strain>C57BL/6J</strain>
        <tissue>Bone marrow</tissue>
    </source>
</reference>
<reference key="3">
    <citation type="journal article" date="2004" name="Genome Res.">
        <title>The status, quality, and expansion of the NIH full-length cDNA project: the Mammalian Gene Collection (MGC).</title>
        <authorList>
            <consortium name="The MGC Project Team"/>
        </authorList>
    </citation>
    <scope>NUCLEOTIDE SEQUENCE [LARGE SCALE MRNA] (ISOFORM 1)</scope>
    <source>
        <tissue>Brain</tissue>
    </source>
</reference>
<reference key="4">
    <citation type="journal article" date="2006" name="Protein Sci.">
        <title>Characterization of the five novel Ly-6 superfamily members encoded in the MHC, and detection of cells expressing their potential ligands.</title>
        <authorList>
            <person name="Mallya M."/>
            <person name="Campbell R.D."/>
            <person name="Aguado B."/>
        </authorList>
    </citation>
    <scope>GLYCOSYLATION</scope>
    <scope>SUBUNIT</scope>
</reference>
<comment type="subunit">
    <text evidence="3">Monomer.</text>
</comment>
<comment type="subcellular location">
    <subcellularLocation>
        <location evidence="5">Secreted</location>
    </subcellularLocation>
</comment>
<comment type="alternative products">
    <event type="alternative splicing"/>
    <isoform>
        <id>Q8K1T4-1</id>
        <name>1</name>
        <sequence type="displayed"/>
    </isoform>
    <isoform>
        <id>Q8K1T4-2</id>
        <name>2</name>
        <sequence type="described" ref="VSP_031256"/>
    </isoform>
</comment>
<comment type="PTM">
    <text evidence="3">N-glycosylated.</text>
</comment>
<name>LY65B_MOUSE</name>
<feature type="signal peptide" evidence="2">
    <location>
        <begin position="1"/>
        <end position="18"/>
    </location>
</feature>
<feature type="chain" id="PRO_0000318603" description="Lymphocyte antigen 6 complex locus protein G5b">
    <location>
        <begin position="19"/>
        <end position="194"/>
    </location>
</feature>
<feature type="domain" description="UPAR/Ly6">
    <location>
        <begin position="26"/>
        <end position="118"/>
    </location>
</feature>
<feature type="glycosylation site" description="N-linked (GlcNAc...) asparagine" evidence="2">
    <location>
        <position position="63"/>
    </location>
</feature>
<feature type="glycosylation site" description="N-linked (GlcNAc...) asparagine" evidence="2">
    <location>
        <position position="141"/>
    </location>
</feature>
<feature type="disulfide bond" evidence="1">
    <location>
        <begin position="28"/>
        <end position="55"/>
    </location>
</feature>
<feature type="disulfide bond" evidence="1">
    <location>
        <begin position="31"/>
        <end position="40"/>
    </location>
</feature>
<feature type="disulfide bond" evidence="1">
    <location>
        <begin position="47"/>
        <end position="73"/>
    </location>
</feature>
<feature type="disulfide bond" evidence="1">
    <location>
        <begin position="81"/>
        <end position="98"/>
    </location>
</feature>
<feature type="disulfide bond" evidence="1">
    <location>
        <begin position="99"/>
        <end position="104"/>
    </location>
</feature>
<feature type="splice variant" id="VSP_031256" description="In isoform 2." evidence="4">
    <location>
        <begin position="1"/>
        <end position="55"/>
    </location>
</feature>